<name>GPPA_SALTI</name>
<accession>P0A268</accession>
<accession>Q9L6S0</accession>
<proteinExistence type="inferred from homology"/>
<organism>
    <name type="scientific">Salmonella typhi</name>
    <dbReference type="NCBI Taxonomy" id="90370"/>
    <lineage>
        <taxon>Bacteria</taxon>
        <taxon>Pseudomonadati</taxon>
        <taxon>Pseudomonadota</taxon>
        <taxon>Gammaproteobacteria</taxon>
        <taxon>Enterobacterales</taxon>
        <taxon>Enterobacteriaceae</taxon>
        <taxon>Salmonella</taxon>
    </lineage>
</organism>
<feature type="chain" id="PRO_0000194288" description="Guanosine-5'-triphosphate,3'-diphosphate pyrophosphatase">
    <location>
        <begin position="1"/>
        <end position="493"/>
    </location>
</feature>
<dbReference type="EC" id="3.6.1.40" evidence="1"/>
<dbReference type="EMBL" id="AL513382">
    <property type="protein sequence ID" value="CAD09402.1"/>
    <property type="molecule type" value="Genomic_DNA"/>
</dbReference>
<dbReference type="EMBL" id="AE014613">
    <property type="protein sequence ID" value="AAO70907.1"/>
    <property type="molecule type" value="Genomic_DNA"/>
</dbReference>
<dbReference type="RefSeq" id="NP_457833.1">
    <property type="nucleotide sequence ID" value="NC_003198.1"/>
</dbReference>
<dbReference type="RefSeq" id="WP_001089447.1">
    <property type="nucleotide sequence ID" value="NZ_WSUR01000032.1"/>
</dbReference>
<dbReference type="SMR" id="P0A268"/>
<dbReference type="STRING" id="220341.gene:17587497"/>
<dbReference type="KEGG" id="stt:t3383"/>
<dbReference type="KEGG" id="sty:STY3641"/>
<dbReference type="PATRIC" id="fig|220341.7.peg.3710"/>
<dbReference type="eggNOG" id="COG0248">
    <property type="taxonomic scope" value="Bacteria"/>
</dbReference>
<dbReference type="HOGENOM" id="CLU_025908_4_0_6"/>
<dbReference type="OMA" id="WQICVGA"/>
<dbReference type="OrthoDB" id="9793035at2"/>
<dbReference type="UniPathway" id="UPA00908">
    <property type="reaction ID" value="UER00885"/>
</dbReference>
<dbReference type="Proteomes" id="UP000000541">
    <property type="component" value="Chromosome"/>
</dbReference>
<dbReference type="Proteomes" id="UP000002670">
    <property type="component" value="Chromosome"/>
</dbReference>
<dbReference type="GO" id="GO:0008894">
    <property type="term" value="F:guanosine-5'-triphosphate,3'-diphosphate diphosphatase activity"/>
    <property type="evidence" value="ECO:0007669"/>
    <property type="project" value="UniProtKB-UniRule"/>
</dbReference>
<dbReference type="GO" id="GO:0015974">
    <property type="term" value="P:guanosine pentaphosphate catabolic process"/>
    <property type="evidence" value="ECO:0007669"/>
    <property type="project" value="InterPro"/>
</dbReference>
<dbReference type="GO" id="GO:0015970">
    <property type="term" value="P:guanosine tetraphosphate biosynthetic process"/>
    <property type="evidence" value="ECO:0007669"/>
    <property type="project" value="UniProtKB-UniRule"/>
</dbReference>
<dbReference type="GO" id="GO:0015949">
    <property type="term" value="P:nucleobase-containing small molecule interconversion"/>
    <property type="evidence" value="ECO:0007669"/>
    <property type="project" value="TreeGrafter"/>
</dbReference>
<dbReference type="CDD" id="cd24117">
    <property type="entry name" value="ASKHA_NBD_EcGppA-like"/>
    <property type="match status" value="1"/>
</dbReference>
<dbReference type="FunFam" id="1.10.3210.10:FF:000004">
    <property type="entry name" value="Guanosine-5'-triphosphate,3'-diphosphate pyrophosphatase"/>
    <property type="match status" value="1"/>
</dbReference>
<dbReference type="FunFam" id="3.30.420.150:FF:000001">
    <property type="entry name" value="Guanosine-5'-triphosphate,3'-diphosphate pyrophosphatase"/>
    <property type="match status" value="1"/>
</dbReference>
<dbReference type="FunFam" id="3.30.420.40:FF:000023">
    <property type="entry name" value="Guanosine-5'-triphosphate,3'-diphosphate pyrophosphatase"/>
    <property type="match status" value="1"/>
</dbReference>
<dbReference type="Gene3D" id="3.30.420.40">
    <property type="match status" value="1"/>
</dbReference>
<dbReference type="Gene3D" id="3.30.420.150">
    <property type="entry name" value="Exopolyphosphatase. Domain 2"/>
    <property type="match status" value="1"/>
</dbReference>
<dbReference type="Gene3D" id="1.10.3210.10">
    <property type="entry name" value="Hypothetical protein af1432"/>
    <property type="match status" value="1"/>
</dbReference>
<dbReference type="HAMAP" id="MF_01550">
    <property type="entry name" value="GppA"/>
    <property type="match status" value="1"/>
</dbReference>
<dbReference type="InterPro" id="IPR043129">
    <property type="entry name" value="ATPase_NBD"/>
</dbReference>
<dbReference type="InterPro" id="IPR050273">
    <property type="entry name" value="GppA/Ppx_hydrolase"/>
</dbReference>
<dbReference type="InterPro" id="IPR023709">
    <property type="entry name" value="Guo-5TP_3DP_PyrP"/>
</dbReference>
<dbReference type="InterPro" id="IPR048950">
    <property type="entry name" value="Ppx_GppA_C"/>
</dbReference>
<dbReference type="InterPro" id="IPR003695">
    <property type="entry name" value="Ppx_GppA_N"/>
</dbReference>
<dbReference type="InterPro" id="IPR030673">
    <property type="entry name" value="PyroPPase_GppA_Ppx"/>
</dbReference>
<dbReference type="NCBIfam" id="NF008260">
    <property type="entry name" value="PRK11031.1"/>
    <property type="match status" value="1"/>
</dbReference>
<dbReference type="PANTHER" id="PTHR30005">
    <property type="entry name" value="EXOPOLYPHOSPHATASE"/>
    <property type="match status" value="1"/>
</dbReference>
<dbReference type="PANTHER" id="PTHR30005:SF0">
    <property type="entry name" value="RETROGRADE REGULATION PROTEIN 2"/>
    <property type="match status" value="1"/>
</dbReference>
<dbReference type="Pfam" id="PF02541">
    <property type="entry name" value="Ppx-GppA"/>
    <property type="match status" value="1"/>
</dbReference>
<dbReference type="Pfam" id="PF21447">
    <property type="entry name" value="Ppx-GppA_III"/>
    <property type="match status" value="1"/>
</dbReference>
<dbReference type="PIRSF" id="PIRSF001267">
    <property type="entry name" value="Pyrophosphatase_GppA_Ppx"/>
    <property type="match status" value="1"/>
</dbReference>
<dbReference type="SUPFAM" id="SSF53067">
    <property type="entry name" value="Actin-like ATPase domain"/>
    <property type="match status" value="2"/>
</dbReference>
<dbReference type="SUPFAM" id="SSF109604">
    <property type="entry name" value="HD-domain/PDEase-like"/>
    <property type="match status" value="1"/>
</dbReference>
<comment type="function">
    <text evidence="1">Catalyzes the conversion of pppGpp to ppGpp. Guanosine pentaphosphate (pppGpp) is a cytoplasmic signaling molecule which together with ppGpp controls the 'stringent response', an adaptive process that allows bacteria to respond to amino acid starvation, resulting in the coordinated regulation of numerous cellular activities.</text>
</comment>
<comment type="catalytic activity">
    <reaction evidence="1">
        <text>guanosine 3'-diphosphate 5'-triphosphate + H2O = guanosine 3',5'-bis(diphosphate) + phosphate + H(+)</text>
        <dbReference type="Rhea" id="RHEA:13073"/>
        <dbReference type="ChEBI" id="CHEBI:15377"/>
        <dbReference type="ChEBI" id="CHEBI:15378"/>
        <dbReference type="ChEBI" id="CHEBI:43474"/>
        <dbReference type="ChEBI" id="CHEBI:77828"/>
        <dbReference type="ChEBI" id="CHEBI:142410"/>
        <dbReference type="EC" id="3.6.1.40"/>
    </reaction>
</comment>
<comment type="pathway">
    <text evidence="1">Purine metabolism; ppGpp biosynthesis; ppGpp from GTP: step 2/2.</text>
</comment>
<comment type="similarity">
    <text evidence="1">Belongs to the GppA/Ppx family. GppA subfamily.</text>
</comment>
<evidence type="ECO:0000255" key="1">
    <source>
        <dbReference type="HAMAP-Rule" id="MF_01550"/>
    </source>
</evidence>
<protein>
    <recommendedName>
        <fullName evidence="1">Guanosine-5'-triphosphate,3'-diphosphate pyrophosphatase</fullName>
        <ecNumber evidence="1">3.6.1.40</ecNumber>
    </recommendedName>
    <alternativeName>
        <fullName evidence="1">Guanosine pentaphosphate phosphohydrolase</fullName>
    </alternativeName>
    <alternativeName>
        <fullName evidence="1">pppGpp-5'-phosphohydrolase</fullName>
    </alternativeName>
</protein>
<gene>
    <name evidence="1" type="primary">gppA</name>
    <name type="ordered locus">STY3641</name>
    <name type="ordered locus">t3383</name>
</gene>
<reference key="1">
    <citation type="journal article" date="2001" name="Nature">
        <title>Complete genome sequence of a multiple drug resistant Salmonella enterica serovar Typhi CT18.</title>
        <authorList>
            <person name="Parkhill J."/>
            <person name="Dougan G."/>
            <person name="James K.D."/>
            <person name="Thomson N.R."/>
            <person name="Pickard D."/>
            <person name="Wain J."/>
            <person name="Churcher C.M."/>
            <person name="Mungall K.L."/>
            <person name="Bentley S.D."/>
            <person name="Holden M.T.G."/>
            <person name="Sebaihia M."/>
            <person name="Baker S."/>
            <person name="Basham D."/>
            <person name="Brooks K."/>
            <person name="Chillingworth T."/>
            <person name="Connerton P."/>
            <person name="Cronin A."/>
            <person name="Davis P."/>
            <person name="Davies R.M."/>
            <person name="Dowd L."/>
            <person name="White N."/>
            <person name="Farrar J."/>
            <person name="Feltwell T."/>
            <person name="Hamlin N."/>
            <person name="Haque A."/>
            <person name="Hien T.T."/>
            <person name="Holroyd S."/>
            <person name="Jagels K."/>
            <person name="Krogh A."/>
            <person name="Larsen T.S."/>
            <person name="Leather S."/>
            <person name="Moule S."/>
            <person name="O'Gaora P."/>
            <person name="Parry C."/>
            <person name="Quail M.A."/>
            <person name="Rutherford K.M."/>
            <person name="Simmonds M."/>
            <person name="Skelton J."/>
            <person name="Stevens K."/>
            <person name="Whitehead S."/>
            <person name="Barrell B.G."/>
        </authorList>
    </citation>
    <scope>NUCLEOTIDE SEQUENCE [LARGE SCALE GENOMIC DNA]</scope>
    <source>
        <strain>CT18</strain>
    </source>
</reference>
<reference key="2">
    <citation type="journal article" date="2003" name="J. Bacteriol.">
        <title>Comparative genomics of Salmonella enterica serovar Typhi strains Ty2 and CT18.</title>
        <authorList>
            <person name="Deng W."/>
            <person name="Liou S.-R."/>
            <person name="Plunkett G. III"/>
            <person name="Mayhew G.F."/>
            <person name="Rose D.J."/>
            <person name="Burland V."/>
            <person name="Kodoyianni V."/>
            <person name="Schwartz D.C."/>
            <person name="Blattner F.R."/>
        </authorList>
    </citation>
    <scope>NUCLEOTIDE SEQUENCE [LARGE SCALE GENOMIC DNA]</scope>
    <source>
        <strain>ATCC 700931 / Ty2</strain>
    </source>
</reference>
<sequence length="493" mass="54816">MNSTSLYAAIDLGSNSFHMLVVREAAGSIQTLTRIKRKVRLAAGLNNDNHLSAEAMERGWQCLRLFAERLQDIPQPQIRVVATATLRLAVNAGEFIAKAQTILGCPVQVISGEEEARLIYQGVAHTTGGADQRLVVDIGGASTELVTGTGAQTTSLFSLSMGCVTWLERYFSDRNLAQENFDDAEKAARDVLRPVADELRFHGWKVCVGASGTVQALQEIMMAQGMDERITLAKLQQLKQRAIQCGRLEELEIEGLTLERALVFPSGLAILIAIFTELNIQSMTLAGGALREGLVYGMLHLAVDQDIRSRTLRNIQRRFIVDTDQANRVAKLADNFLKQVENAWHIEPISRELLLSACQLHEIGLSVDFKQAPYHAAYLVRHLDLPGYTPAQKKLLATLLLNQTNPVDLSSLHQQNAVPPRVAEQLCRLLRLAILFAGRRRDDLVPEITLQALNENLTLTLPGDWLAHHPLGKELIDQESQWQSYVHWPLDVR</sequence>
<keyword id="KW-0378">Hydrolase</keyword>